<keyword id="KW-1017">Isopeptide bond</keyword>
<keyword id="KW-1185">Reference proteome</keyword>
<keyword id="KW-0677">Repeat</keyword>
<keyword id="KW-0808">Transferase</keyword>
<keyword id="KW-0832">Ubl conjugation</keyword>
<gene>
    <name type="primary">tssA</name>
    <name type="ordered locus">HVO_0025</name>
</gene>
<organism>
    <name type="scientific">Haloferax volcanii (strain ATCC 29605 / DSM 3757 / JCM 8879 / NBRC 14742 / NCIMB 2012 / VKM B-1768 / DS2)</name>
    <name type="common">Halobacterium volcanii</name>
    <dbReference type="NCBI Taxonomy" id="309800"/>
    <lineage>
        <taxon>Archaea</taxon>
        <taxon>Methanobacteriati</taxon>
        <taxon>Methanobacteriota</taxon>
        <taxon>Stenosarchaea group</taxon>
        <taxon>Halobacteria</taxon>
        <taxon>Halobacteriales</taxon>
        <taxon>Haloferacaceae</taxon>
        <taxon>Haloferax</taxon>
    </lineage>
</organism>
<sequence>MSNSDYAKDVLVSADWVESHLDEFQSDDPAYRLVEVDVDTEAYDESHAPGAIGFNWESQLQDQTTRDVLTKEDFEDLLGSHGISEDSTVVLYGDNSNWFAAYTYWQFKYYGHENVHLMNGGRDYWVDNDYPTTDEIPSFPEQDYSAKGPFEDIRAYRDDVEKAVDKGLPLVDVRSPEEFSGEILAPPGLQETAQRGGHIPGASNISWAATVNDDGTFKSADELRDLYADQGIEGDESTIAYCRIGERSSIAWFALHELLGYENVTNYDGSWTEWGNLVGAPVEKGN</sequence>
<accession>D4GYM0</accession>
<protein>
    <recommendedName>
        <fullName>Putative thiosulfate sulfurtransferase</fullName>
        <ecNumber>2.8.1.1</ecNumber>
    </recommendedName>
    <alternativeName>
        <fullName>Rhodanese-like protein</fullName>
    </alternativeName>
</protein>
<comment type="function">
    <text evidence="1">May be a sulfotransferase involved in the formation of thiosulfate.</text>
</comment>
<comment type="catalytic activity">
    <reaction>
        <text>thiosulfate + hydrogen cyanide = thiocyanate + sulfite + 2 H(+)</text>
        <dbReference type="Rhea" id="RHEA:16881"/>
        <dbReference type="ChEBI" id="CHEBI:15378"/>
        <dbReference type="ChEBI" id="CHEBI:17359"/>
        <dbReference type="ChEBI" id="CHEBI:18022"/>
        <dbReference type="ChEBI" id="CHEBI:18407"/>
        <dbReference type="ChEBI" id="CHEBI:33542"/>
        <dbReference type="EC" id="2.8.1.1"/>
    </reaction>
</comment>
<comment type="domain">
    <text evidence="1">Contains two rhodanese domains with different primary structures but with near identical secondary structure conformations suggesting a common evolutionary origin. Only the C-terminal rhodanese domain contains the catalytic cysteine residue (By similarity).</text>
</comment>
<dbReference type="EC" id="2.8.1.1"/>
<dbReference type="EMBL" id="CP001956">
    <property type="protein sequence ID" value="ADE04616.1"/>
    <property type="molecule type" value="Genomic_DNA"/>
</dbReference>
<dbReference type="RefSeq" id="WP_004045008.1">
    <property type="nucleotide sequence ID" value="NC_013967.1"/>
</dbReference>
<dbReference type="SMR" id="D4GYM0"/>
<dbReference type="STRING" id="309800.HVO_0025"/>
<dbReference type="PaxDb" id="309800-C498_18363"/>
<dbReference type="EnsemblBacteria" id="ADE04616">
    <property type="protein sequence ID" value="ADE04616"/>
    <property type="gene ID" value="HVO_0025"/>
</dbReference>
<dbReference type="GeneID" id="8923901"/>
<dbReference type="KEGG" id="hvo:HVO_0025"/>
<dbReference type="eggNOG" id="arCOG02019">
    <property type="taxonomic scope" value="Archaea"/>
</dbReference>
<dbReference type="HOGENOM" id="CLU_031618_1_3_2"/>
<dbReference type="OrthoDB" id="10492at2157"/>
<dbReference type="Proteomes" id="UP000008243">
    <property type="component" value="Chromosome"/>
</dbReference>
<dbReference type="GO" id="GO:0004792">
    <property type="term" value="F:thiosulfate-cyanide sulfurtransferase activity"/>
    <property type="evidence" value="ECO:0007669"/>
    <property type="project" value="UniProtKB-EC"/>
</dbReference>
<dbReference type="CDD" id="cd01448">
    <property type="entry name" value="TST_Repeat_1"/>
    <property type="match status" value="1"/>
</dbReference>
<dbReference type="CDD" id="cd01449">
    <property type="entry name" value="TST_Repeat_2"/>
    <property type="match status" value="1"/>
</dbReference>
<dbReference type="Gene3D" id="3.40.250.10">
    <property type="entry name" value="Rhodanese-like domain"/>
    <property type="match status" value="2"/>
</dbReference>
<dbReference type="InterPro" id="IPR001763">
    <property type="entry name" value="Rhodanese-like_dom"/>
</dbReference>
<dbReference type="InterPro" id="IPR036873">
    <property type="entry name" value="Rhodanese-like_dom_sf"/>
</dbReference>
<dbReference type="InterPro" id="IPR051126">
    <property type="entry name" value="Thiosulfate_sulfurtransferase"/>
</dbReference>
<dbReference type="InterPro" id="IPR001307">
    <property type="entry name" value="Thiosulphate_STrfase_CS"/>
</dbReference>
<dbReference type="PANTHER" id="PTHR43855">
    <property type="entry name" value="THIOSULFATE SULFURTRANSFERASE"/>
    <property type="match status" value="1"/>
</dbReference>
<dbReference type="PANTHER" id="PTHR43855:SF1">
    <property type="entry name" value="THIOSULFATE SULFURTRANSFERASE"/>
    <property type="match status" value="1"/>
</dbReference>
<dbReference type="Pfam" id="PF00581">
    <property type="entry name" value="Rhodanese"/>
    <property type="match status" value="2"/>
</dbReference>
<dbReference type="SMART" id="SM00450">
    <property type="entry name" value="RHOD"/>
    <property type="match status" value="2"/>
</dbReference>
<dbReference type="SUPFAM" id="SSF52821">
    <property type="entry name" value="Rhodanese/Cell cycle control phosphatase"/>
    <property type="match status" value="2"/>
</dbReference>
<dbReference type="PROSITE" id="PS00683">
    <property type="entry name" value="RHODANESE_2"/>
    <property type="match status" value="1"/>
</dbReference>
<dbReference type="PROSITE" id="PS50206">
    <property type="entry name" value="RHODANESE_3"/>
    <property type="match status" value="2"/>
</dbReference>
<reference key="1">
    <citation type="journal article" date="2010" name="PLoS ONE">
        <title>The complete genome sequence of Haloferax volcanii DS2, a model archaeon.</title>
        <authorList>
            <person name="Hartman A.L."/>
            <person name="Norais C."/>
            <person name="Badger J.H."/>
            <person name="Delmas S."/>
            <person name="Haldenby S."/>
            <person name="Madupu R."/>
            <person name="Robinson J."/>
            <person name="Khouri H."/>
            <person name="Ren Q."/>
            <person name="Lowe T.M."/>
            <person name="Maupin-Furlow J."/>
            <person name="Pohlschroder M."/>
            <person name="Daniels C."/>
            <person name="Pfeiffer F."/>
            <person name="Allers T."/>
            <person name="Eisen J.A."/>
        </authorList>
    </citation>
    <scope>NUCLEOTIDE SEQUENCE [LARGE SCALE GENOMIC DNA]</scope>
    <source>
        <strain>ATCC 29605 / DSM 3757 / JCM 8879 / NBRC 14742 / NCIMB 2012 / VKM B-1768 / DS2</strain>
    </source>
</reference>
<reference key="2">
    <citation type="journal article" date="2010" name="Nature">
        <title>Ubiquitin-like small archaeal modifier proteins (SAMPs) in Haloferax volcanii.</title>
        <authorList>
            <person name="Humbard M.A."/>
            <person name="Miranda H.V."/>
            <person name="Lim J.M."/>
            <person name="Krause D.J."/>
            <person name="Pritz J.R."/>
            <person name="Zhou G."/>
            <person name="Chen S."/>
            <person name="Wells L."/>
            <person name="Maupin-Furlow J.A."/>
        </authorList>
    </citation>
    <scope>SAMPYLATION AT LYS-162 AND LYS-166</scope>
    <scope>IDENTIFICATION BY MASS SPECTROMETRY</scope>
</reference>
<evidence type="ECO:0000250" key="1"/>
<evidence type="ECO:0000255" key="2">
    <source>
        <dbReference type="PROSITE-ProRule" id="PRU00173"/>
    </source>
</evidence>
<feature type="chain" id="PRO_0000397112" description="Putative thiosulfate sulfurtransferase">
    <location>
        <begin position="1"/>
        <end position="286"/>
    </location>
</feature>
<feature type="domain" description="Rhodanese 1" evidence="2">
    <location>
        <begin position="27"/>
        <end position="134"/>
    </location>
</feature>
<feature type="domain" description="Rhodanese 2" evidence="2">
    <location>
        <begin position="164"/>
        <end position="283"/>
    </location>
</feature>
<feature type="active site" description="Cysteine persulfide intermediate" evidence="2">
    <location>
        <position position="242"/>
    </location>
</feature>
<feature type="binding site" evidence="1">
    <location>
        <position position="247"/>
    </location>
    <ligand>
        <name>substrate</name>
    </ligand>
</feature>
<feature type="cross-link" description="Glycyl lysine isopeptide (Lys-Gly) (interchain with G-Cter in SAMP2)">
    <location>
        <position position="162"/>
    </location>
</feature>
<feature type="cross-link" description="Glycyl lysine isopeptide (Lys-Gly) (interchain with G-Cter in SAMP2)">
    <location>
        <position position="166"/>
    </location>
</feature>
<name>THTR_HALVD</name>
<proteinExistence type="evidence at protein level"/>